<protein>
    <recommendedName>
        <fullName>Gamma carbonic anhydrase-like 2, mitochondrial</fullName>
        <shortName>AtCAL2</shortName>
        <shortName>GAMMA CAL2</shortName>
    </recommendedName>
</protein>
<accession>Q9SMN1</accession>
<proteinExistence type="evidence at protein level"/>
<keyword id="KW-0002">3D-structure</keyword>
<keyword id="KW-0903">Direct protein sequencing</keyword>
<keyword id="KW-0472">Membrane</keyword>
<keyword id="KW-0479">Metal-binding</keyword>
<keyword id="KW-0496">Mitochondrion</keyword>
<keyword id="KW-1185">Reference proteome</keyword>
<keyword id="KW-0809">Transit peptide</keyword>
<keyword id="KW-0862">Zinc</keyword>
<gene>
    <name type="primary">GAMMACAL2</name>
    <name type="ordered locus">At3g48680</name>
    <name type="ORF">T8P19.190</name>
</gene>
<name>GCAL2_ARATH</name>
<evidence type="ECO:0000250" key="1"/>
<evidence type="ECO:0000255" key="2"/>
<evidence type="ECO:0000269" key="3">
    <source>
    </source>
</evidence>
<evidence type="ECO:0000269" key="4">
    <source>
    </source>
</evidence>
<evidence type="ECO:0000269" key="5">
    <source>
    </source>
</evidence>
<evidence type="ECO:0000305" key="6"/>
<evidence type="ECO:0000312" key="7">
    <source>
        <dbReference type="EMBL" id="AAK25924.1"/>
    </source>
</evidence>
<evidence type="ECO:0007829" key="8">
    <source>
        <dbReference type="PDB" id="7AQQ"/>
    </source>
</evidence>
<evidence type="ECO:0007829" key="9">
    <source>
        <dbReference type="PDB" id="8BEF"/>
    </source>
</evidence>
<dbReference type="EMBL" id="AL133315">
    <property type="protein sequence ID" value="CAB62357.1"/>
    <property type="molecule type" value="Genomic_DNA"/>
</dbReference>
<dbReference type="EMBL" id="CP002686">
    <property type="protein sequence ID" value="AEE78445.1"/>
    <property type="molecule type" value="Genomic_DNA"/>
</dbReference>
<dbReference type="EMBL" id="AF360214">
    <property type="protein sequence ID" value="AAK25924.1"/>
    <property type="molecule type" value="mRNA"/>
</dbReference>
<dbReference type="EMBL" id="AY051017">
    <property type="protein sequence ID" value="AAK93694.1"/>
    <property type="molecule type" value="mRNA"/>
</dbReference>
<dbReference type="PIR" id="T46212">
    <property type="entry name" value="T46212"/>
</dbReference>
<dbReference type="PDB" id="7AQQ">
    <property type="method" value="EM"/>
    <property type="resolution" value="3.06 A"/>
    <property type="chains" value="x=1-256"/>
</dbReference>
<dbReference type="PDB" id="7AR7">
    <property type="method" value="EM"/>
    <property type="resolution" value="3.72 A"/>
    <property type="chains" value="x=41-254"/>
</dbReference>
<dbReference type="PDB" id="7AR8">
    <property type="method" value="EM"/>
    <property type="resolution" value="3.53 A"/>
    <property type="chains" value="x=1-256"/>
</dbReference>
<dbReference type="PDB" id="7ARB">
    <property type="method" value="EM"/>
    <property type="resolution" value="3.41 A"/>
    <property type="chains" value="x=1-256"/>
</dbReference>
<dbReference type="PDB" id="8BEF">
    <property type="method" value="EM"/>
    <property type="resolution" value="2.13 A"/>
    <property type="chains" value="x=1-256"/>
</dbReference>
<dbReference type="PDB" id="8BPX">
    <property type="method" value="EM"/>
    <property type="resolution" value="2.09 A"/>
    <property type="chains" value="x=1-256"/>
</dbReference>
<dbReference type="PDB" id="8BQ5">
    <property type="method" value="EM"/>
    <property type="resolution" value="2.73 A"/>
    <property type="chains" value="x=1-256"/>
</dbReference>
<dbReference type="PDB" id="8BQ6">
    <property type="method" value="EM"/>
    <property type="resolution" value="2.80 A"/>
    <property type="chains" value="x=1-256"/>
</dbReference>
<dbReference type="PDBsum" id="7AQQ"/>
<dbReference type="PDBsum" id="7AR7"/>
<dbReference type="PDBsum" id="7AR8"/>
<dbReference type="PDBsum" id="7ARB"/>
<dbReference type="PDBsum" id="8BEF"/>
<dbReference type="PDBsum" id="8BPX"/>
<dbReference type="PDBsum" id="8BQ5"/>
<dbReference type="PDBsum" id="8BQ6"/>
<dbReference type="EMDB" id="EMD-11872"/>
<dbReference type="EMDB" id="EMD-11875"/>
<dbReference type="EMDB" id="EMD-11876"/>
<dbReference type="EMDB" id="EMD-11878"/>
<dbReference type="EMDB" id="EMD-16000"/>
<dbReference type="EMDB" id="EMD-16168"/>
<dbReference type="EMDB" id="EMD-16171"/>
<dbReference type="EMDB" id="EMD-16172"/>
<dbReference type="SMR" id="Q9SMN1"/>
<dbReference type="BioGRID" id="9347">
    <property type="interactions" value="39"/>
</dbReference>
<dbReference type="FunCoup" id="Q9SMN1">
    <property type="interactions" value="623"/>
</dbReference>
<dbReference type="IntAct" id="Q9SMN1">
    <property type="interactions" value="6"/>
</dbReference>
<dbReference type="STRING" id="3702.Q9SMN1"/>
<dbReference type="GlyGen" id="Q9SMN1">
    <property type="glycosylation" value="1 site"/>
</dbReference>
<dbReference type="iPTMnet" id="Q9SMN1"/>
<dbReference type="PaxDb" id="3702-AT3G48680.1"/>
<dbReference type="ProteomicsDB" id="221888"/>
<dbReference type="EnsemblPlants" id="AT3G48680.1">
    <property type="protein sequence ID" value="AT3G48680.1"/>
    <property type="gene ID" value="AT3G48680"/>
</dbReference>
<dbReference type="Gramene" id="AT3G48680.1">
    <property type="protein sequence ID" value="AT3G48680.1"/>
    <property type="gene ID" value="AT3G48680"/>
</dbReference>
<dbReference type="KEGG" id="ath:AT3G48680"/>
<dbReference type="Araport" id="AT3G48680"/>
<dbReference type="TAIR" id="AT3G48680">
    <property type="gene designation" value="GAMMA CAL2"/>
</dbReference>
<dbReference type="eggNOG" id="ENOG502QQV5">
    <property type="taxonomic scope" value="Eukaryota"/>
</dbReference>
<dbReference type="HOGENOM" id="CLU_064827_0_1_1"/>
<dbReference type="InParanoid" id="Q9SMN1"/>
<dbReference type="OMA" id="NIEPECI"/>
<dbReference type="PhylomeDB" id="Q9SMN1"/>
<dbReference type="BioCyc" id="ARA:AT3G48680-MONOMER"/>
<dbReference type="BioCyc" id="MetaCyc:AT3G48680-MONOMER"/>
<dbReference type="BRENDA" id="4.2.1.1">
    <property type="organism ID" value="399"/>
</dbReference>
<dbReference type="PRO" id="PR:Q9SMN1"/>
<dbReference type="Proteomes" id="UP000006548">
    <property type="component" value="Chromosome 3"/>
</dbReference>
<dbReference type="ExpressionAtlas" id="Q9SMN1">
    <property type="expression patterns" value="baseline and differential"/>
</dbReference>
<dbReference type="GO" id="GO:0005829">
    <property type="term" value="C:cytosol"/>
    <property type="evidence" value="ECO:0007005"/>
    <property type="project" value="TAIR"/>
</dbReference>
<dbReference type="GO" id="GO:0031966">
    <property type="term" value="C:mitochondrial membrane"/>
    <property type="evidence" value="ECO:0000314"/>
    <property type="project" value="TAIR"/>
</dbReference>
<dbReference type="GO" id="GO:0005739">
    <property type="term" value="C:mitochondrion"/>
    <property type="evidence" value="ECO:0000314"/>
    <property type="project" value="TAIR"/>
</dbReference>
<dbReference type="GO" id="GO:0000325">
    <property type="term" value="C:plant-type vacuole"/>
    <property type="evidence" value="ECO:0007005"/>
    <property type="project" value="TAIR"/>
</dbReference>
<dbReference type="GO" id="GO:0045271">
    <property type="term" value="C:respiratory chain complex I"/>
    <property type="evidence" value="ECO:0000314"/>
    <property type="project" value="TAIR"/>
</dbReference>
<dbReference type="GO" id="GO:0046872">
    <property type="term" value="F:metal ion binding"/>
    <property type="evidence" value="ECO:0007669"/>
    <property type="project" value="UniProtKB-KW"/>
</dbReference>
<dbReference type="GO" id="GO:0009853">
    <property type="term" value="P:photorespiration"/>
    <property type="evidence" value="ECO:0000304"/>
    <property type="project" value="TAIR"/>
</dbReference>
<dbReference type="GO" id="GO:0009737">
    <property type="term" value="P:response to abscisic acid"/>
    <property type="evidence" value="ECO:0000316"/>
    <property type="project" value="TAIR"/>
</dbReference>
<dbReference type="GO" id="GO:0009651">
    <property type="term" value="P:response to salt stress"/>
    <property type="evidence" value="ECO:0000316"/>
    <property type="project" value="TAIR"/>
</dbReference>
<dbReference type="GO" id="GO:0010228">
    <property type="term" value="P:vegetative to reproductive phase transition of meristem"/>
    <property type="evidence" value="ECO:0000316"/>
    <property type="project" value="TAIR"/>
</dbReference>
<dbReference type="CDD" id="cd04645">
    <property type="entry name" value="LbH_gamma_CA_like"/>
    <property type="match status" value="1"/>
</dbReference>
<dbReference type="FunFam" id="2.160.10.10:FF:000035">
    <property type="entry name" value="Gamma carbonic anhydrase-like 1, mitochondrial"/>
    <property type="match status" value="1"/>
</dbReference>
<dbReference type="Gene3D" id="2.160.10.10">
    <property type="entry name" value="Hexapeptide repeat proteins"/>
    <property type="match status" value="1"/>
</dbReference>
<dbReference type="InterPro" id="IPR047324">
    <property type="entry name" value="LbH_gamma_CA-like"/>
</dbReference>
<dbReference type="InterPro" id="IPR050484">
    <property type="entry name" value="Transf_Hexapept/Carb_Anhydrase"/>
</dbReference>
<dbReference type="InterPro" id="IPR011004">
    <property type="entry name" value="Trimer_LpxA-like_sf"/>
</dbReference>
<dbReference type="PANTHER" id="PTHR13061">
    <property type="entry name" value="DYNACTIN SUBUNIT P25"/>
    <property type="match status" value="1"/>
</dbReference>
<dbReference type="PANTHER" id="PTHR13061:SF29">
    <property type="entry name" value="GAMMA CARBONIC ANHYDRASE-LIKE 1, MITOCHONDRIAL-RELATED"/>
    <property type="match status" value="1"/>
</dbReference>
<dbReference type="SUPFAM" id="SSF51161">
    <property type="entry name" value="Trimeric LpxA-like enzymes"/>
    <property type="match status" value="1"/>
</dbReference>
<organism evidence="7">
    <name type="scientific">Arabidopsis thaliana</name>
    <name type="common">Mouse-ear cress</name>
    <dbReference type="NCBI Taxonomy" id="3702"/>
    <lineage>
        <taxon>Eukaryota</taxon>
        <taxon>Viridiplantae</taxon>
        <taxon>Streptophyta</taxon>
        <taxon>Embryophyta</taxon>
        <taxon>Tracheophyta</taxon>
        <taxon>Spermatophyta</taxon>
        <taxon>Magnoliopsida</taxon>
        <taxon>eudicotyledons</taxon>
        <taxon>Gunneridae</taxon>
        <taxon>Pentapetalae</taxon>
        <taxon>rosids</taxon>
        <taxon>malvids</taxon>
        <taxon>Brassicales</taxon>
        <taxon>Brassicaceae</taxon>
        <taxon>Camelineae</taxon>
        <taxon>Arabidopsis</taxon>
    </lineage>
</organism>
<feature type="transit peptide" description="Mitochondrion" evidence="2">
    <location>
        <begin position="1"/>
        <end position="33"/>
    </location>
</feature>
<feature type="chain" id="PRO_0000220589" description="Gamma carbonic anhydrase-like 2, mitochondrial">
    <location>
        <begin position="34"/>
        <end position="256"/>
    </location>
</feature>
<feature type="binding site" evidence="6">
    <location>
        <begin position="103"/>
        <end position="105"/>
    </location>
    <ligand>
        <name>substrate</name>
    </ligand>
</feature>
<feature type="binding site" evidence="6">
    <location>
        <begin position="118"/>
        <end position="119"/>
    </location>
    <ligand>
        <name>substrate</name>
    </ligand>
</feature>
<feature type="binding site" evidence="6">
    <location>
        <position position="124"/>
    </location>
    <ligand>
        <name>Zn(2+)</name>
        <dbReference type="ChEBI" id="CHEBI:29105"/>
    </ligand>
</feature>
<feature type="binding site" evidence="6">
    <location>
        <position position="152"/>
    </location>
    <ligand>
        <name>substrate</name>
    </ligand>
</feature>
<feature type="binding site" evidence="6">
    <location>
        <position position="164"/>
    </location>
    <ligand>
        <name>substrate</name>
    </ligand>
</feature>
<feature type="binding site" evidence="6">
    <location>
        <position position="231"/>
    </location>
    <ligand>
        <name>substrate</name>
    </ligand>
</feature>
<feature type="strand" evidence="9">
    <location>
        <begin position="61"/>
        <end position="63"/>
    </location>
</feature>
<feature type="strand" evidence="9">
    <location>
        <begin position="83"/>
        <end position="90"/>
    </location>
</feature>
<feature type="strand" evidence="9">
    <location>
        <begin position="101"/>
        <end position="111"/>
    </location>
</feature>
<feature type="strand" evidence="9">
    <location>
        <begin position="122"/>
        <end position="124"/>
    </location>
</feature>
<feature type="strand" evidence="9">
    <location>
        <begin position="137"/>
        <end position="139"/>
    </location>
</feature>
<feature type="strand" evidence="9">
    <location>
        <begin position="143"/>
        <end position="145"/>
    </location>
</feature>
<feature type="strand" evidence="9">
    <location>
        <begin position="150"/>
        <end position="153"/>
    </location>
</feature>
<feature type="strand" evidence="9">
    <location>
        <begin position="158"/>
        <end position="162"/>
    </location>
</feature>
<feature type="strand" evidence="8">
    <location>
        <begin position="176"/>
        <end position="180"/>
    </location>
</feature>
<feature type="strand" evidence="9">
    <location>
        <begin position="190"/>
        <end position="192"/>
    </location>
</feature>
<feature type="strand" evidence="9">
    <location>
        <begin position="196"/>
        <end position="199"/>
    </location>
</feature>
<feature type="turn" evidence="9">
    <location>
        <begin position="200"/>
        <end position="203"/>
    </location>
</feature>
<feature type="strand" evidence="9">
    <location>
        <begin position="204"/>
        <end position="208"/>
    </location>
</feature>
<feature type="helix" evidence="9">
    <location>
        <begin position="211"/>
        <end position="232"/>
    </location>
</feature>
<feature type="helix" evidence="9">
    <location>
        <begin position="241"/>
        <end position="250"/>
    </location>
</feature>
<sequence>MATSLARISKRSITSAVSSNLIRRYFAAEAVAVATTETPKPKSQVTPSPDRVKWDYRGQRQIIPLGQWLPKVAVDAYVAPNVVLAGQVTVWDGSSVWNGAVLRGDLNKITVGFCSNVQERCVVHAAWSSPTGLPAQTLIDRYVTVGAYSLLRSCTIEPECIIGQHSILMEGSLVETRSILEAGSVLPPGRRIPSGELWGGNPARFIRTLTNEETLEIPKLAVAINHLSGDYFSEFLPYSTIYLEVEKFKKSLGIAI</sequence>
<reference evidence="6" key="1">
    <citation type="journal article" date="2000" name="Nature">
        <title>Sequence and analysis of chromosome 3 of the plant Arabidopsis thaliana.</title>
        <authorList>
            <person name="Salanoubat M."/>
            <person name="Lemcke K."/>
            <person name="Rieger M."/>
            <person name="Ansorge W."/>
            <person name="Unseld M."/>
            <person name="Fartmann B."/>
            <person name="Valle G."/>
            <person name="Bloecker H."/>
            <person name="Perez-Alonso M."/>
            <person name="Obermaier B."/>
            <person name="Delseny M."/>
            <person name="Boutry M."/>
            <person name="Grivell L.A."/>
            <person name="Mache R."/>
            <person name="Puigdomenech P."/>
            <person name="De Simone V."/>
            <person name="Choisne N."/>
            <person name="Artiguenave F."/>
            <person name="Robert C."/>
            <person name="Brottier P."/>
            <person name="Wincker P."/>
            <person name="Cattolico L."/>
            <person name="Weissenbach J."/>
            <person name="Saurin W."/>
            <person name="Quetier F."/>
            <person name="Schaefer M."/>
            <person name="Mueller-Auer S."/>
            <person name="Gabel C."/>
            <person name="Fuchs M."/>
            <person name="Benes V."/>
            <person name="Wurmbach E."/>
            <person name="Drzonek H."/>
            <person name="Erfle H."/>
            <person name="Jordan N."/>
            <person name="Bangert S."/>
            <person name="Wiedelmann R."/>
            <person name="Kranz H."/>
            <person name="Voss H."/>
            <person name="Holland R."/>
            <person name="Brandt P."/>
            <person name="Nyakatura G."/>
            <person name="Vezzi A."/>
            <person name="D'Angelo M."/>
            <person name="Pallavicini A."/>
            <person name="Toppo S."/>
            <person name="Simionati B."/>
            <person name="Conrad A."/>
            <person name="Hornischer K."/>
            <person name="Kauer G."/>
            <person name="Loehnert T.-H."/>
            <person name="Nordsiek G."/>
            <person name="Reichelt J."/>
            <person name="Scharfe M."/>
            <person name="Schoen O."/>
            <person name="Bargues M."/>
            <person name="Terol J."/>
            <person name="Climent J."/>
            <person name="Navarro P."/>
            <person name="Collado C."/>
            <person name="Perez-Perez A."/>
            <person name="Ottenwaelder B."/>
            <person name="Duchemin D."/>
            <person name="Cooke R."/>
            <person name="Laudie M."/>
            <person name="Berger-Llauro C."/>
            <person name="Purnelle B."/>
            <person name="Masuy D."/>
            <person name="de Haan M."/>
            <person name="Maarse A.C."/>
            <person name="Alcaraz J.-P."/>
            <person name="Cottet A."/>
            <person name="Casacuberta E."/>
            <person name="Monfort A."/>
            <person name="Argiriou A."/>
            <person name="Flores M."/>
            <person name="Liguori R."/>
            <person name="Vitale D."/>
            <person name="Mannhaupt G."/>
            <person name="Haase D."/>
            <person name="Schoof H."/>
            <person name="Rudd S."/>
            <person name="Zaccaria P."/>
            <person name="Mewes H.-W."/>
            <person name="Mayer K.F.X."/>
            <person name="Kaul S."/>
            <person name="Town C.D."/>
            <person name="Koo H.L."/>
            <person name="Tallon L.J."/>
            <person name="Jenkins J."/>
            <person name="Rooney T."/>
            <person name="Rizzo M."/>
            <person name="Walts A."/>
            <person name="Utterback T."/>
            <person name="Fujii C.Y."/>
            <person name="Shea T.P."/>
            <person name="Creasy T.H."/>
            <person name="Haas B."/>
            <person name="Maiti R."/>
            <person name="Wu D."/>
            <person name="Peterson J."/>
            <person name="Van Aken S."/>
            <person name="Pai G."/>
            <person name="Militscher J."/>
            <person name="Sellers P."/>
            <person name="Gill J.E."/>
            <person name="Feldblyum T.V."/>
            <person name="Preuss D."/>
            <person name="Lin X."/>
            <person name="Nierman W.C."/>
            <person name="Salzberg S.L."/>
            <person name="White O."/>
            <person name="Venter J.C."/>
            <person name="Fraser C.M."/>
            <person name="Kaneko T."/>
            <person name="Nakamura Y."/>
            <person name="Sato S."/>
            <person name="Kato T."/>
            <person name="Asamizu E."/>
            <person name="Sasamoto S."/>
            <person name="Kimura T."/>
            <person name="Idesawa K."/>
            <person name="Kawashima K."/>
            <person name="Kishida Y."/>
            <person name="Kiyokawa C."/>
            <person name="Kohara M."/>
            <person name="Matsumoto M."/>
            <person name="Matsuno A."/>
            <person name="Muraki A."/>
            <person name="Nakayama S."/>
            <person name="Nakazaki N."/>
            <person name="Shinpo S."/>
            <person name="Takeuchi C."/>
            <person name="Wada T."/>
            <person name="Watanabe A."/>
            <person name="Yamada M."/>
            <person name="Yasuda M."/>
            <person name="Tabata S."/>
        </authorList>
    </citation>
    <scope>NUCLEOTIDE SEQUENCE [LARGE SCALE GENOMIC DNA]</scope>
    <source>
        <strain>cv. Columbia</strain>
    </source>
</reference>
<reference evidence="6" key="2">
    <citation type="journal article" date="2017" name="Plant J.">
        <title>Araport11: a complete reannotation of the Arabidopsis thaliana reference genome.</title>
        <authorList>
            <person name="Cheng C.Y."/>
            <person name="Krishnakumar V."/>
            <person name="Chan A.P."/>
            <person name="Thibaud-Nissen F."/>
            <person name="Schobel S."/>
            <person name="Town C.D."/>
        </authorList>
    </citation>
    <scope>GENOME REANNOTATION</scope>
    <source>
        <strain>cv. Columbia</strain>
    </source>
</reference>
<reference key="3">
    <citation type="journal article" date="2003" name="Science">
        <title>Empirical analysis of transcriptional activity in the Arabidopsis genome.</title>
        <authorList>
            <person name="Yamada K."/>
            <person name="Lim J."/>
            <person name="Dale J.M."/>
            <person name="Chen H."/>
            <person name="Shinn P."/>
            <person name="Palm C.J."/>
            <person name="Southwick A.M."/>
            <person name="Wu H.C."/>
            <person name="Kim C.J."/>
            <person name="Nguyen M."/>
            <person name="Pham P.K."/>
            <person name="Cheuk R.F."/>
            <person name="Karlin-Newmann G."/>
            <person name="Liu S.X."/>
            <person name="Lam B."/>
            <person name="Sakano H."/>
            <person name="Wu T."/>
            <person name="Yu G."/>
            <person name="Miranda M."/>
            <person name="Quach H.L."/>
            <person name="Tripp M."/>
            <person name="Chang C.H."/>
            <person name="Lee J.M."/>
            <person name="Toriumi M.J."/>
            <person name="Chan M.M."/>
            <person name="Tang C.C."/>
            <person name="Onodera C.S."/>
            <person name="Deng J.M."/>
            <person name="Akiyama K."/>
            <person name="Ansari Y."/>
            <person name="Arakawa T."/>
            <person name="Banh J."/>
            <person name="Banno F."/>
            <person name="Bowser L."/>
            <person name="Brooks S.Y."/>
            <person name="Carninci P."/>
            <person name="Chao Q."/>
            <person name="Choy N."/>
            <person name="Enju A."/>
            <person name="Goldsmith A.D."/>
            <person name="Gurjal M."/>
            <person name="Hansen N.F."/>
            <person name="Hayashizaki Y."/>
            <person name="Johnson-Hopson C."/>
            <person name="Hsuan V.W."/>
            <person name="Iida K."/>
            <person name="Karnes M."/>
            <person name="Khan S."/>
            <person name="Koesema E."/>
            <person name="Ishida J."/>
            <person name="Jiang P.X."/>
            <person name="Jones T."/>
            <person name="Kawai J."/>
            <person name="Kamiya A."/>
            <person name="Meyers C."/>
            <person name="Nakajima M."/>
            <person name="Narusaka M."/>
            <person name="Seki M."/>
            <person name="Sakurai T."/>
            <person name="Satou M."/>
            <person name="Tamse R."/>
            <person name="Vaysberg M."/>
            <person name="Wallender E.K."/>
            <person name="Wong C."/>
            <person name="Yamamura Y."/>
            <person name="Yuan S."/>
            <person name="Shinozaki K."/>
            <person name="Davis R.W."/>
            <person name="Theologis A."/>
            <person name="Ecker J.R."/>
        </authorList>
    </citation>
    <scope>NUCLEOTIDE SEQUENCE [LARGE SCALE MRNA]</scope>
    <source>
        <strain>cv. Columbia</strain>
    </source>
</reference>
<reference evidence="6" key="4">
    <citation type="journal article" date="2001" name="Plant Physiol.">
        <title>Proteomic approach to identify novel mitochondrial proteins in Arabidopsis.</title>
        <authorList>
            <person name="Kruft V."/>
            <person name="Eubel H."/>
            <person name="Jaensch L."/>
            <person name="Werhahn W."/>
            <person name="Braun H.-P."/>
        </authorList>
    </citation>
    <scope>PROTEIN SEQUENCE OF 31-36; 192-204 AND 208-219</scope>
    <scope>SUBCELLULAR LOCATION</scope>
    <source>
        <tissue>Leaf</tissue>
        <tissue>Stem</tissue>
    </source>
</reference>
<reference key="5">
    <citation type="journal article" date="2004" name="Plant Cell">
        <title>Experimental analysis of the Arabidopsis mitochondrial proteome highlights signaling and regulatory components, provides assessment of targeting prediction programs, and indicates plant-specific mitochondrial proteins.</title>
        <authorList>
            <person name="Heazlewood J.L."/>
            <person name="Tonti-Filippini J.S."/>
            <person name="Gout A.M."/>
            <person name="Day D.A."/>
            <person name="Whelan J."/>
            <person name="Millar A.H."/>
        </authorList>
    </citation>
    <scope>IDENTIFICATION BY MASS SPECTROMETRY</scope>
    <scope>SUBCELLULAR LOCATION [LARGE SCALE ANALYSIS]</scope>
    <source>
        <strain>cv. Landsberg erecta</strain>
    </source>
</reference>
<reference key="6">
    <citation type="journal article" date="2004" name="Plant Mol. Biol.">
        <title>Gamma carbonic anhydrase like complex interact with plant mitochondrial complex I.</title>
        <authorList>
            <person name="Perales M."/>
            <person name="Parisi G."/>
            <person name="Fornasari M.S."/>
            <person name="Colaneri A."/>
            <person name="Villarreal F."/>
            <person name="Gonzalez-Schain N."/>
            <person name="Echave J."/>
            <person name="Gomez-Casati D."/>
            <person name="Braun H.-P."/>
            <person name="Araya A."/>
            <person name="Zabaleta E."/>
        </authorList>
    </citation>
    <scope>INTERACTION WITH GAMMACA2</scope>
    <scope>SUBUNIT</scope>
    <scope>SUBCELLULAR LOCATION</scope>
</reference>
<reference key="7">
    <citation type="journal article" date="2006" name="J. Biol. Chem.">
        <title>Carbonic anhydrase subunits form a matrix-exposed domain attached to the membrane arm of mitochondrial complex I in plants.</title>
        <authorList>
            <person name="Sunderhaus S."/>
            <person name="Dudkina N.V."/>
            <person name="Jaensch L."/>
            <person name="Klodmann J."/>
            <person name="Heinemeyer J."/>
            <person name="Perales M."/>
            <person name="Zabaleta E."/>
            <person name="Boekema E.J."/>
            <person name="Braun H.-P."/>
        </authorList>
    </citation>
    <scope>IDENTIFICATION BY MASS SPECTROMETRY</scope>
</reference>
<comment type="function">
    <text>Involved in complex I assembly in mitochondria and respiration.</text>
</comment>
<comment type="subunit">
    <text evidence="5">Component of the mitochondrial oxidoreductase respiratory chain complex I; element of the extra matrix-exposed domain, which is attached to the membrane arm of this complex. Interacts with GAMMACA2.</text>
</comment>
<comment type="interaction">
    <interactant intactId="EBI-532001">
        <id>Q9SMN1</id>
    </interactant>
    <interactant intactId="EBI-531995">
        <id>Q9C6B3</id>
        <label>GAMMACA2</label>
    </interactant>
    <organismsDiffer>false</organismsDiffer>
    <experiments>3</experiments>
</comment>
<comment type="interaction">
    <interactant intactId="EBI-532001">
        <id>Q9SMN1</id>
    </interactant>
    <interactant intactId="EBI-2460434">
        <id>Q9LRH6</id>
        <label>GATA25</label>
    </interactant>
    <organismsDiffer>false</organismsDiffer>
    <experiments>3</experiments>
</comment>
<comment type="interaction">
    <interactant intactId="EBI-532001">
        <id>Q9SMN1</id>
    </interactant>
    <interactant intactId="EBI-963665">
        <id>Q8GXW1</id>
        <label>RGL2</label>
    </interactant>
    <organismsDiffer>false</organismsDiffer>
    <experiments>3</experiments>
</comment>
<comment type="interaction">
    <interactant intactId="EBI-532001">
        <id>Q9SMN1</id>
    </interactant>
    <interactant intactId="EBI-4426557">
        <id>Q84MB2</id>
        <label>TIFY8</label>
    </interactant>
    <organismsDiffer>false</organismsDiffer>
    <experiments>3</experiments>
</comment>
<comment type="subcellular location">
    <subcellularLocation>
        <location evidence="3 4 5">Mitochondrion membrane</location>
        <topology evidence="3 4 5">Peripheral membrane protein</topology>
        <orientation evidence="3 4 5">Matrix side</orientation>
    </subcellularLocation>
    <text evidence="1">Probably integral to the membrane.</text>
</comment>
<comment type="similarity">
    <text evidence="6">Belongs to the gamma-class carbonic anhydrase family.</text>
</comment>